<accession>O33522</accession>
<accession>Q1LJ81</accession>
<gene>
    <name type="primary">dnaK</name>
    <name type="ordered locus">Rmet_2922</name>
</gene>
<feature type="chain" id="PRO_0000078406" description="Chaperone protein DnaK">
    <location>
        <begin position="1"/>
        <end position="648"/>
    </location>
</feature>
<feature type="region of interest" description="Disordered" evidence="2">
    <location>
        <begin position="612"/>
        <end position="635"/>
    </location>
</feature>
<feature type="modified residue" description="Phosphothreonine; by autocatalysis" evidence="1">
    <location>
        <position position="200"/>
    </location>
</feature>
<feature type="sequence conflict" description="In Ref. 1; CAA04955." evidence="3" ref="1">
    <original>VL</original>
    <variation>AV</variation>
    <location>
        <begin position="119"/>
        <end position="120"/>
    </location>
</feature>
<feature type="sequence conflict" description="In Ref. 1; CAA04955." evidence="3" ref="1">
    <original>SQR</original>
    <variation>AQC</variation>
    <location>
        <begin position="149"/>
        <end position="151"/>
    </location>
</feature>
<feature type="sequence conflict" description="In Ref. 1; CAA04955." evidence="3" ref="1">
    <original>K</original>
    <variation>R</variation>
    <location>
        <position position="247"/>
    </location>
</feature>
<feature type="sequence conflict" description="In Ref. 1; CAA04955." evidence="3" ref="1">
    <original>L</original>
    <variation>C</variation>
    <location>
        <position position="263"/>
    </location>
</feature>
<feature type="sequence conflict" description="In Ref. 1; CAA04955." evidence="3" ref="1">
    <original>EYGEKLEAGEKEKIEAAIKDLEDAARGGD</original>
    <variation>RVRREARSWREGKDRSRDQGPGRRRPRVN</variation>
    <location>
        <begin position="553"/>
        <end position="581"/>
    </location>
</feature>
<feature type="sequence conflict" description="In Ref. 1." evidence="3" ref="1">
    <original>GGAQQQAQPQDDNVVDAEFKEVNDKK</original>
    <variation>RFSSRPSRRRQRVGCRVQGSERQEVIGDG</variation>
    <location>
        <begin position="623"/>
        <end position="648"/>
    </location>
</feature>
<name>DNAK_CUPMC</name>
<reference key="1">
    <citation type="submission" date="1997-10" db="EMBL/GenBank/DDBJ databases">
        <title>Construction and characterization of a DnaK mutant of Ralstonia eutropha strain CH34.</title>
        <authorList>
            <person name="Talbi S."/>
            <person name="van der Lelie D."/>
        </authorList>
    </citation>
    <scope>NUCLEOTIDE SEQUENCE [GENOMIC DNA]</scope>
</reference>
<reference key="2">
    <citation type="journal article" date="2010" name="PLoS ONE">
        <title>The complete genome sequence of Cupriavidus metallidurans strain CH34, a master survivalist in harsh and anthropogenic environments.</title>
        <authorList>
            <person name="Janssen P.J."/>
            <person name="Van Houdt R."/>
            <person name="Moors H."/>
            <person name="Monsieurs P."/>
            <person name="Morin N."/>
            <person name="Michaux A."/>
            <person name="Benotmane M.A."/>
            <person name="Leys N."/>
            <person name="Vallaeys T."/>
            <person name="Lapidus A."/>
            <person name="Monchy S."/>
            <person name="Medigue C."/>
            <person name="Taghavi S."/>
            <person name="McCorkle S."/>
            <person name="Dunn J."/>
            <person name="van der Lelie D."/>
            <person name="Mergeay M."/>
        </authorList>
    </citation>
    <scope>NUCLEOTIDE SEQUENCE [LARGE SCALE GENOMIC DNA]</scope>
    <source>
        <strain>ATCC 43123 / DSM 2839 / NBRC 102507 / CH34</strain>
    </source>
</reference>
<organism>
    <name type="scientific">Cupriavidus metallidurans (strain ATCC 43123 / DSM 2839 / NBRC 102507 / CH34)</name>
    <name type="common">Ralstonia metallidurans</name>
    <dbReference type="NCBI Taxonomy" id="266264"/>
    <lineage>
        <taxon>Bacteria</taxon>
        <taxon>Pseudomonadati</taxon>
        <taxon>Pseudomonadota</taxon>
        <taxon>Betaproteobacteria</taxon>
        <taxon>Burkholderiales</taxon>
        <taxon>Burkholderiaceae</taxon>
        <taxon>Cupriavidus</taxon>
    </lineage>
</organism>
<keyword id="KW-0067">ATP-binding</keyword>
<keyword id="KW-0143">Chaperone</keyword>
<keyword id="KW-0547">Nucleotide-binding</keyword>
<keyword id="KW-0597">Phosphoprotein</keyword>
<keyword id="KW-1185">Reference proteome</keyword>
<keyword id="KW-0346">Stress response</keyword>
<sequence length="648" mass="69787">MGKIIGIDLGTTNSCVSILEGNTPKVIENSEGARTTPSIIAYMEDGEILVGAPAKRQAVTNPRNTLYAVKRLIGRKFEEKEVQKDIGLMPYAIVKADNGDAWVGVRDQKLAPPQVSAEVLRKMKKTAEDYLGEPVTEAVITVPAYFNDSQRQATKDAGRIAGLDVKRIINEPTAAALAFGMDKNEKGDRKIAVYDLGGGTFDISIIEIADVDGEKQFEVLSTNGDTFLGGEDFDQRIIDYIIGEFKKEQGVDLSKDVLALQRLKEAAEKAKIELSSSQQTEINLPYITADASGPKHLNLKITRAKLEALVEELITRTIEPCRTAIKDAGVKVSDIDDVILVGGMTRMPKVQEQVREFFGKEARKDVNPDEAVAVGAAIQGSVLSGDRTDVLLLDVTPLSLGIETLGGVMTKMINKNTTIPTKHAQVFSTADDNQPAVTIKVYQGEREMATGNKMLGEFNLEGIAPAPRGTPQIEVSFDIDANGILHVGAKDKATGKENRITIKANSGLSEDEIQRMVKDAEANAEEDKRARELADARNQADALIHSTRKALGEYGEKLEAGEKEKIEAAIKDLEDAARGGDKAEIDAKVNALSEASQKLGEKVYADMQAQAGEGAAAGAGAAGGAQQQAQPQDDNVVDAEFKEVNDKK</sequence>
<evidence type="ECO:0000250" key="1"/>
<evidence type="ECO:0000256" key="2">
    <source>
        <dbReference type="SAM" id="MobiDB-lite"/>
    </source>
</evidence>
<evidence type="ECO:0000305" key="3"/>
<comment type="function">
    <text evidence="1">Acts as a chaperone.</text>
</comment>
<comment type="induction">
    <text evidence="1">By stress conditions e.g. heat shock (By similarity).</text>
</comment>
<comment type="similarity">
    <text evidence="3">Belongs to the heat shock protein 70 family.</text>
</comment>
<dbReference type="EMBL" id="AJ001727">
    <property type="protein sequence ID" value="CAA04955.1"/>
    <property type="molecule type" value="Genomic_DNA"/>
</dbReference>
<dbReference type="EMBL" id="CP000352">
    <property type="protein sequence ID" value="ABF09795.1"/>
    <property type="molecule type" value="Genomic_DNA"/>
</dbReference>
<dbReference type="RefSeq" id="WP_011517467.1">
    <property type="nucleotide sequence ID" value="NC_007973.1"/>
</dbReference>
<dbReference type="SMR" id="O33522"/>
<dbReference type="STRING" id="266264.Rmet_2922"/>
<dbReference type="KEGG" id="rme:Rmet_2922"/>
<dbReference type="eggNOG" id="COG0443">
    <property type="taxonomic scope" value="Bacteria"/>
</dbReference>
<dbReference type="HOGENOM" id="CLU_005965_2_1_4"/>
<dbReference type="Proteomes" id="UP000002429">
    <property type="component" value="Chromosome"/>
</dbReference>
<dbReference type="GO" id="GO:0005524">
    <property type="term" value="F:ATP binding"/>
    <property type="evidence" value="ECO:0007669"/>
    <property type="project" value="UniProtKB-UniRule"/>
</dbReference>
<dbReference type="GO" id="GO:0140662">
    <property type="term" value="F:ATP-dependent protein folding chaperone"/>
    <property type="evidence" value="ECO:0007669"/>
    <property type="project" value="InterPro"/>
</dbReference>
<dbReference type="GO" id="GO:0051082">
    <property type="term" value="F:unfolded protein binding"/>
    <property type="evidence" value="ECO:0007669"/>
    <property type="project" value="InterPro"/>
</dbReference>
<dbReference type="CDD" id="cd10234">
    <property type="entry name" value="ASKHA_NBD_HSP70_DnaK-like"/>
    <property type="match status" value="1"/>
</dbReference>
<dbReference type="FunFam" id="2.60.34.10:FF:000014">
    <property type="entry name" value="Chaperone protein DnaK HSP70"/>
    <property type="match status" value="1"/>
</dbReference>
<dbReference type="FunFam" id="1.20.1270.10:FF:000001">
    <property type="entry name" value="Molecular chaperone DnaK"/>
    <property type="match status" value="1"/>
</dbReference>
<dbReference type="FunFam" id="3.30.420.40:FF:000004">
    <property type="entry name" value="Molecular chaperone DnaK"/>
    <property type="match status" value="1"/>
</dbReference>
<dbReference type="FunFam" id="3.90.640.10:FF:000003">
    <property type="entry name" value="Molecular chaperone DnaK"/>
    <property type="match status" value="1"/>
</dbReference>
<dbReference type="Gene3D" id="1.20.1270.10">
    <property type="match status" value="1"/>
</dbReference>
<dbReference type="Gene3D" id="3.30.420.40">
    <property type="match status" value="2"/>
</dbReference>
<dbReference type="Gene3D" id="3.90.640.10">
    <property type="entry name" value="Actin, Chain A, domain 4"/>
    <property type="match status" value="1"/>
</dbReference>
<dbReference type="Gene3D" id="2.60.34.10">
    <property type="entry name" value="Substrate Binding Domain Of DNAk, Chain A, domain 1"/>
    <property type="match status" value="1"/>
</dbReference>
<dbReference type="HAMAP" id="MF_00332">
    <property type="entry name" value="DnaK"/>
    <property type="match status" value="1"/>
</dbReference>
<dbReference type="InterPro" id="IPR043129">
    <property type="entry name" value="ATPase_NBD"/>
</dbReference>
<dbReference type="InterPro" id="IPR012725">
    <property type="entry name" value="Chaperone_DnaK"/>
</dbReference>
<dbReference type="InterPro" id="IPR018181">
    <property type="entry name" value="Heat_shock_70_CS"/>
</dbReference>
<dbReference type="InterPro" id="IPR029048">
    <property type="entry name" value="HSP70_C_sf"/>
</dbReference>
<dbReference type="InterPro" id="IPR029047">
    <property type="entry name" value="HSP70_peptide-bd_sf"/>
</dbReference>
<dbReference type="InterPro" id="IPR013126">
    <property type="entry name" value="Hsp_70_fam"/>
</dbReference>
<dbReference type="NCBIfam" id="NF001413">
    <property type="entry name" value="PRK00290.1"/>
    <property type="match status" value="1"/>
</dbReference>
<dbReference type="NCBIfam" id="NF003520">
    <property type="entry name" value="PRK05183.1"/>
    <property type="match status" value="1"/>
</dbReference>
<dbReference type="NCBIfam" id="TIGR02350">
    <property type="entry name" value="prok_dnaK"/>
    <property type="match status" value="1"/>
</dbReference>
<dbReference type="PANTHER" id="PTHR19375">
    <property type="entry name" value="HEAT SHOCK PROTEIN 70KDA"/>
    <property type="match status" value="1"/>
</dbReference>
<dbReference type="Pfam" id="PF00012">
    <property type="entry name" value="HSP70"/>
    <property type="match status" value="1"/>
</dbReference>
<dbReference type="PRINTS" id="PR00301">
    <property type="entry name" value="HEATSHOCK70"/>
</dbReference>
<dbReference type="SUPFAM" id="SSF53067">
    <property type="entry name" value="Actin-like ATPase domain"/>
    <property type="match status" value="2"/>
</dbReference>
<dbReference type="SUPFAM" id="SSF100934">
    <property type="entry name" value="Heat shock protein 70kD (HSP70), C-terminal subdomain"/>
    <property type="match status" value="1"/>
</dbReference>
<dbReference type="SUPFAM" id="SSF100920">
    <property type="entry name" value="Heat shock protein 70kD (HSP70), peptide-binding domain"/>
    <property type="match status" value="1"/>
</dbReference>
<dbReference type="PROSITE" id="PS00297">
    <property type="entry name" value="HSP70_1"/>
    <property type="match status" value="1"/>
</dbReference>
<dbReference type="PROSITE" id="PS00329">
    <property type="entry name" value="HSP70_2"/>
    <property type="match status" value="1"/>
</dbReference>
<dbReference type="PROSITE" id="PS01036">
    <property type="entry name" value="HSP70_3"/>
    <property type="match status" value="1"/>
</dbReference>
<proteinExistence type="inferred from homology"/>
<protein>
    <recommendedName>
        <fullName>Chaperone protein DnaK</fullName>
    </recommendedName>
    <alternativeName>
        <fullName>HSP70</fullName>
    </alternativeName>
    <alternativeName>
        <fullName>Heat shock 70 kDa protein</fullName>
    </alternativeName>
    <alternativeName>
        <fullName>Heat shock protein 70</fullName>
    </alternativeName>
</protein>